<accession>Q0P5I0</accession>
<keyword id="KW-0156">Chromatin regulator</keyword>
<keyword id="KW-0238">DNA-binding</keyword>
<keyword id="KW-0539">Nucleus</keyword>
<keyword id="KW-0597">Phosphoprotein</keyword>
<keyword id="KW-1185">Reference proteome</keyword>
<keyword id="KW-0678">Repressor</keyword>
<keyword id="KW-0804">Transcription</keyword>
<keyword id="KW-0805">Transcription regulation</keyword>
<proteinExistence type="evidence at transcript level"/>
<evidence type="ECO:0000250" key="1">
    <source>
        <dbReference type="UniProtKB" id="O00255"/>
    </source>
</evidence>
<evidence type="ECO:0000250" key="2">
    <source>
        <dbReference type="UniProtKB" id="O88559"/>
    </source>
</evidence>
<evidence type="ECO:0000256" key="3">
    <source>
        <dbReference type="SAM" id="MobiDB-lite"/>
    </source>
</evidence>
<name>MEN1_BOVIN</name>
<protein>
    <recommendedName>
        <fullName>Menin</fullName>
    </recommendedName>
</protein>
<comment type="function">
    <text evidence="1 2">Essential component of a MLL/SET1 histone methyltransferase (HMT) complex, a complex that specifically methylates 'Lys-4' of histone H3 (H3K4). Functions as a transcriptional regulator. Binds to the TERT promoter and represses telomerase expression. Plays a role in TGFB1-mediated inhibition of cell-proliferation, possibly regulating SMAD3 transcriptional activity. Represses JUND-mediated transcriptional activation on AP1 sites, as well as that mediated by NFKB subunit RELA. Positively regulates HOXC8 and HOXC6 gene expression. May be involved in normal hematopoiesis through the activation of HOXA9 expression. May be involved in DNA repair (By similarity).</text>
</comment>
<comment type="subunit">
    <text evidence="1">Component of the MLL-HCF complex, at least composed of KMT2A/MLL1, MEN1, ASH2L, RBBP5, DPY30, WDR5, HCFC1 and HCFC2 (By similarity). Component of the menin-associated histone methyltransferase complex, at least composed of KMT2B/MLL4, MEN1, ASH2L, RBBP5, DPY30 and WDR5 (By similarity). Interacts with POLR2B (By similarity). Interacts with POLR2A phosphorylated at 'Ser-5', but not with the unphosphorylated, nor 'Ser-2' phosphorylated POLR2A forms (By similarity). Interacts with FANCD2 and DBF4 (By similarity). Interacts with SMAD3, but not with SMAD2, nor SMAD4 (By similarity). Directly interacts with NFKB1, NFKB2 and RELA (By similarity). Interacts with JUND (via MBM motif); inhibits the interaction of JUND with MAPK10 and the phosphorylation of JUND by MAP kinases MAPK8 and MAPK10 (By similarity). Interacts with KMT2A (via MBM motif) (By similarity). The KMT2A-MEN1 complex interacts with PSIP1 with a greater affinity as MEN1 enhances interaction of KMT2A with PSIP1 (By similarity).</text>
</comment>
<comment type="subcellular location">
    <subcellularLocation>
        <location evidence="1">Nucleus</location>
    </subcellularLocation>
</comment>
<dbReference type="EMBL" id="BC120005">
    <property type="protein sequence ID" value="AAI20006.1"/>
    <property type="molecule type" value="mRNA"/>
</dbReference>
<dbReference type="RefSeq" id="NP_001069629.1">
    <property type="nucleotide sequence ID" value="NM_001076161.3"/>
</dbReference>
<dbReference type="RefSeq" id="XP_005227211.1">
    <property type="nucleotide sequence ID" value="XM_005227154.5"/>
</dbReference>
<dbReference type="RefSeq" id="XP_005227212.1">
    <property type="nucleotide sequence ID" value="XM_005227155.5"/>
</dbReference>
<dbReference type="SMR" id="Q0P5I0"/>
<dbReference type="FunCoup" id="Q0P5I0">
    <property type="interactions" value="4613"/>
</dbReference>
<dbReference type="STRING" id="9913.ENSBTAP00000066214"/>
<dbReference type="PaxDb" id="9913-ENSBTAP00000002705"/>
<dbReference type="GeneID" id="539431"/>
<dbReference type="KEGG" id="bta:539431"/>
<dbReference type="CTD" id="4221"/>
<dbReference type="VEuPathDB" id="HostDB:ENSBTAG00000002095"/>
<dbReference type="eggNOG" id="ENOG502QUYK">
    <property type="taxonomic scope" value="Eukaryota"/>
</dbReference>
<dbReference type="HOGENOM" id="CLU_018646_0_0_1"/>
<dbReference type="InParanoid" id="Q0P5I0"/>
<dbReference type="OMA" id="SDVIWNG"/>
<dbReference type="OrthoDB" id="5962932at2759"/>
<dbReference type="TreeFam" id="TF323888"/>
<dbReference type="Reactome" id="R-BTA-201722">
    <property type="pathway name" value="Formation of the beta-catenin:TCF transactivating complex"/>
</dbReference>
<dbReference type="Reactome" id="R-BTA-2173796">
    <property type="pathway name" value="SMAD2/SMAD3:SMAD4 heterotrimer regulates transcription"/>
</dbReference>
<dbReference type="Reactome" id="R-BTA-381426">
    <property type="pathway name" value="Regulation of Insulin-like Growth Factor (IGF) transport and uptake by Insulin-like Growth Factor Binding Proteins (IGFBPs)"/>
</dbReference>
<dbReference type="Reactome" id="R-BTA-5626467">
    <property type="pathway name" value="RHO GTPases activate IQGAPs"/>
</dbReference>
<dbReference type="Reactome" id="R-BTA-8957275">
    <property type="pathway name" value="Post-translational protein phosphorylation"/>
</dbReference>
<dbReference type="Reactome" id="R-BTA-9772755">
    <property type="pathway name" value="Formation of WDR5-containing histone-modifying complexes"/>
</dbReference>
<dbReference type="Proteomes" id="UP000009136">
    <property type="component" value="Chromosome 29"/>
</dbReference>
<dbReference type="Bgee" id="ENSBTAG00000002095">
    <property type="expression patterns" value="Expressed in retina and 105 other cell types or tissues"/>
</dbReference>
<dbReference type="GO" id="GO:0000785">
    <property type="term" value="C:chromatin"/>
    <property type="evidence" value="ECO:0000318"/>
    <property type="project" value="GO_Central"/>
</dbReference>
<dbReference type="GO" id="GO:0035097">
    <property type="term" value="C:histone methyltransferase complex"/>
    <property type="evidence" value="ECO:0000318"/>
    <property type="project" value="GO_Central"/>
</dbReference>
<dbReference type="GO" id="GO:0003682">
    <property type="term" value="F:chromatin binding"/>
    <property type="evidence" value="ECO:0000318"/>
    <property type="project" value="GO_Central"/>
</dbReference>
<dbReference type="GO" id="GO:0000976">
    <property type="term" value="F:transcription cis-regulatory region binding"/>
    <property type="evidence" value="ECO:0000318"/>
    <property type="project" value="GO_Central"/>
</dbReference>
<dbReference type="GO" id="GO:0000403">
    <property type="term" value="F:Y-form DNA binding"/>
    <property type="evidence" value="ECO:0000318"/>
    <property type="project" value="GO_Central"/>
</dbReference>
<dbReference type="GO" id="GO:0006325">
    <property type="term" value="P:chromatin organization"/>
    <property type="evidence" value="ECO:0007669"/>
    <property type="project" value="UniProtKB-KW"/>
</dbReference>
<dbReference type="GO" id="GO:0045786">
    <property type="term" value="P:negative regulation of cell cycle"/>
    <property type="evidence" value="ECO:0000318"/>
    <property type="project" value="GO_Central"/>
</dbReference>
<dbReference type="GO" id="GO:0008285">
    <property type="term" value="P:negative regulation of cell population proliferation"/>
    <property type="evidence" value="ECO:0000318"/>
    <property type="project" value="GO_Central"/>
</dbReference>
<dbReference type="GO" id="GO:0006357">
    <property type="term" value="P:regulation of transcription by RNA polymerase II"/>
    <property type="evidence" value="ECO:0000318"/>
    <property type="project" value="GO_Central"/>
</dbReference>
<dbReference type="CDD" id="cd14456">
    <property type="entry name" value="Menin"/>
    <property type="match status" value="1"/>
</dbReference>
<dbReference type="InterPro" id="IPR007747">
    <property type="entry name" value="Menin"/>
</dbReference>
<dbReference type="PANTHER" id="PTHR12693">
    <property type="entry name" value="MENIN"/>
    <property type="match status" value="1"/>
</dbReference>
<dbReference type="PANTHER" id="PTHR12693:SF3">
    <property type="entry name" value="MENIN"/>
    <property type="match status" value="1"/>
</dbReference>
<dbReference type="Pfam" id="PF05053">
    <property type="entry name" value="Menin"/>
    <property type="match status" value="2"/>
</dbReference>
<feature type="chain" id="PRO_0000408471" description="Menin">
    <location>
        <begin position="1"/>
        <end position="610"/>
    </location>
</feature>
<feature type="region of interest" description="Interaction with FANCD2" evidence="1">
    <location>
        <begin position="214"/>
        <end position="390"/>
    </location>
</feature>
<feature type="region of interest" description="Disordered" evidence="3">
    <location>
        <begin position="385"/>
        <end position="404"/>
    </location>
</feature>
<feature type="region of interest" description="Disordered" evidence="3">
    <location>
        <begin position="460"/>
        <end position="552"/>
    </location>
</feature>
<feature type="compositionally biased region" description="Low complexity" evidence="3">
    <location>
        <begin position="393"/>
        <end position="402"/>
    </location>
</feature>
<feature type="compositionally biased region" description="Basic and acidic residues" evidence="3">
    <location>
        <begin position="484"/>
        <end position="500"/>
    </location>
</feature>
<feature type="compositionally biased region" description="Pro residues" evidence="3">
    <location>
        <begin position="512"/>
        <end position="521"/>
    </location>
</feature>
<feature type="compositionally biased region" description="Pro residues" evidence="3">
    <location>
        <begin position="537"/>
        <end position="548"/>
    </location>
</feature>
<feature type="modified residue" description="Phosphoserine" evidence="1">
    <location>
        <position position="487"/>
    </location>
</feature>
<feature type="modified residue" description="Phosphoserine" evidence="1">
    <location>
        <position position="543"/>
    </location>
</feature>
<feature type="modified residue" description="Phosphothreonine" evidence="1">
    <location>
        <position position="594"/>
    </location>
</feature>
<organism>
    <name type="scientific">Bos taurus</name>
    <name type="common">Bovine</name>
    <dbReference type="NCBI Taxonomy" id="9913"/>
    <lineage>
        <taxon>Eukaryota</taxon>
        <taxon>Metazoa</taxon>
        <taxon>Chordata</taxon>
        <taxon>Craniata</taxon>
        <taxon>Vertebrata</taxon>
        <taxon>Euteleostomi</taxon>
        <taxon>Mammalia</taxon>
        <taxon>Eutheria</taxon>
        <taxon>Laurasiatheria</taxon>
        <taxon>Artiodactyla</taxon>
        <taxon>Ruminantia</taxon>
        <taxon>Pecora</taxon>
        <taxon>Bovidae</taxon>
        <taxon>Bovinae</taxon>
        <taxon>Bos</taxon>
    </lineage>
</organism>
<reference key="1">
    <citation type="submission" date="2006-08" db="EMBL/GenBank/DDBJ databases">
        <authorList>
            <consortium name="NIH - Mammalian Gene Collection (MGC) project"/>
        </authorList>
    </citation>
    <scope>NUCLEOTIDE SEQUENCE [LARGE SCALE MRNA]</scope>
    <source>
        <strain>Hereford</strain>
        <tissue>Fetal pons</tissue>
    </source>
</reference>
<gene>
    <name type="primary">MEN1</name>
</gene>
<sequence>MGLKAAQKTLFPLRSIDDVVRLFAAELGREEPDLVLLSLVLGFVEHFLAVNRVIPTNVPELTFQPSPAPDPPGGLTYFPVADLSIIAALYARFTAQIRGAVDLSLYPREGGVSSRELVKKVSDVIWNSLSRSYFKDRAHIQSLFSFITGTKLDSSGVAFAVVGACQALGLRDVHLALSEDHAWVVFGPNGEQTAEVTWHGKGNEDRRGQTVNAGVAERSWLYLKGSYMRCDRKMEVAFMVCAINPSIDLHTDSLELLQLQQKLLWLLYDLGHLERYPMALGNLADLEELEPTPGRPDPLTLYHKGIASAKTYYRDEHIYPYMYLAGYHCRNRNVREALQAWADTATVIQDYNYCREDEEIYKEFFEVANDVIPNLLKEAASLLEAGEERPGEQTQGTQSQGSALQDPECFAHLLRFYDGICKWEEGSPTPVLHVGWATFLVQSLGRFEGQVRQKVRIVSREAEAAEAEEPWGEEAREGRRRGPRRESKPEEPPPPKKPALDKGPGAGQGAVPGPPRKPPGTVPGTARGAEGGSAAPVPAPAASPPPEGPVLTFQSEKMKGMKELLVATKINSSAIKLQLTAQSQVQMKKQKVSTPSDYTLSFLKRQRKGL</sequence>